<comment type="function">
    <text evidence="1">Component of the ribosome, a large ribonucleoprotein complex responsible for the synthesis of proteins in the cell. The small ribosomal subunit (SSU) binds messenger RNAs (mRNAs) and translates the encoded message by selecting cognate aminoacyl-transfer RNA (tRNA) molecules. The large subunit (LSU) contains the ribosomal catalytic site termed the peptidyl transferase center (PTC), which catalyzes the formation of peptide bonds, thereby polymerizing the amino acids delivered by tRNAs into a polypeptide chain. The nascent polypeptides leave the ribosome through a tunnel in the LSU and interact with protein factors that function in enzymatic processing, targeting, and the membrane insertion of nascent chains at the exit of the ribosomal tunnel.</text>
</comment>
<comment type="subunit">
    <text evidence="1">Component of the small ribosomal subunit (SSU). Mature yeast ribosomes consist of a small (40S) and a large (60S) subunit. The 40S small subunit contains 1 molecule of ribosomal RNA (18S rRNA) and at least 33 different proteins. The large 60S subunit contains 3 rRNA molecules (25S, 5.8S and 5S rRNA) and at least 46 different proteins.</text>
</comment>
<comment type="subcellular location">
    <subcellularLocation>
        <location evidence="2">Cytoplasm</location>
    </subcellularLocation>
</comment>
<comment type="miscellaneous">
    <text>There are 2 genes for uS7 in S.pombe.</text>
</comment>
<comment type="similarity">
    <text evidence="3">Belongs to the universal ribosomal protein uS7 family.</text>
</comment>
<accession>Q9P3T6</accession>
<name>RS5B_SCHPO</name>
<organism>
    <name type="scientific">Schizosaccharomyces pombe (strain 972 / ATCC 24843)</name>
    <name type="common">Fission yeast</name>
    <dbReference type="NCBI Taxonomy" id="284812"/>
    <lineage>
        <taxon>Eukaryota</taxon>
        <taxon>Fungi</taxon>
        <taxon>Dikarya</taxon>
        <taxon>Ascomycota</taxon>
        <taxon>Taphrinomycotina</taxon>
        <taxon>Schizosaccharomycetes</taxon>
        <taxon>Schizosaccharomycetales</taxon>
        <taxon>Schizosaccharomycetaceae</taxon>
        <taxon>Schizosaccharomyces</taxon>
    </lineage>
</organism>
<sequence length="203" mass="22357">MAASIIPKEVSLDETGHIKLFNKFPFEGVEVKDISLVDYITIGNGQPLPHTAGRFQTKRFRKARCFIVERLTNSLMMNGRNNGKKLLATRIVKHAFEIIALLTDQNPLQVLVDAVAACGPREDSTRIGSAGTVRRQAVDVSPLRRVNQALALITIGAREAAFRNVKSISECLAEEIINAAKGSSNSYAIKKKDELERVAKSNR</sequence>
<dbReference type="EMBL" id="CU329670">
    <property type="protein sequence ID" value="CAB96005.1"/>
    <property type="molecule type" value="Genomic_DNA"/>
</dbReference>
<dbReference type="RefSeq" id="NP_594212.1">
    <property type="nucleotide sequence ID" value="NM_001019635.2"/>
</dbReference>
<dbReference type="SMR" id="Q9P3T6"/>
<dbReference type="BioGRID" id="278207">
    <property type="interactions" value="7"/>
</dbReference>
<dbReference type="FunCoup" id="Q9P3T6">
    <property type="interactions" value="583"/>
</dbReference>
<dbReference type="IntAct" id="Q9P3T6">
    <property type="interactions" value="1"/>
</dbReference>
<dbReference type="STRING" id="284812.Q9P3T6"/>
<dbReference type="iPTMnet" id="Q9P3T6"/>
<dbReference type="PaxDb" id="4896-SPAC328.10c.1"/>
<dbReference type="EnsemblFungi" id="SPAC328.10c.1">
    <property type="protein sequence ID" value="SPAC328.10c.1:pep"/>
    <property type="gene ID" value="SPAC328.10c"/>
</dbReference>
<dbReference type="GeneID" id="2541712"/>
<dbReference type="KEGG" id="spo:2541712"/>
<dbReference type="PomBase" id="SPAC328.10c">
    <property type="gene designation" value="rps502"/>
</dbReference>
<dbReference type="VEuPathDB" id="FungiDB:SPAC328.10c"/>
<dbReference type="eggNOG" id="KOG3291">
    <property type="taxonomic scope" value="Eukaryota"/>
</dbReference>
<dbReference type="HOGENOM" id="CLU_063975_0_0_1"/>
<dbReference type="InParanoid" id="Q9P3T6"/>
<dbReference type="OMA" id="KMNIVER"/>
<dbReference type="PhylomeDB" id="Q9P3T6"/>
<dbReference type="PRO" id="PR:Q9P3T6"/>
<dbReference type="Proteomes" id="UP000002485">
    <property type="component" value="Chromosome I"/>
</dbReference>
<dbReference type="GO" id="GO:0005829">
    <property type="term" value="C:cytosol"/>
    <property type="evidence" value="ECO:0007005"/>
    <property type="project" value="PomBase"/>
</dbReference>
<dbReference type="GO" id="GO:0022627">
    <property type="term" value="C:cytosolic small ribosomal subunit"/>
    <property type="evidence" value="ECO:0000318"/>
    <property type="project" value="GO_Central"/>
</dbReference>
<dbReference type="GO" id="GO:0005840">
    <property type="term" value="C:ribosome"/>
    <property type="evidence" value="ECO:0000318"/>
    <property type="project" value="GO_Central"/>
</dbReference>
<dbReference type="GO" id="GO:0003729">
    <property type="term" value="F:mRNA binding"/>
    <property type="evidence" value="ECO:0000318"/>
    <property type="project" value="GO_Central"/>
</dbReference>
<dbReference type="GO" id="GO:0019843">
    <property type="term" value="F:rRNA binding"/>
    <property type="evidence" value="ECO:0000318"/>
    <property type="project" value="GO_Central"/>
</dbReference>
<dbReference type="GO" id="GO:0003735">
    <property type="term" value="F:structural constituent of ribosome"/>
    <property type="evidence" value="ECO:0000318"/>
    <property type="project" value="GO_Central"/>
</dbReference>
<dbReference type="GO" id="GO:0002181">
    <property type="term" value="P:cytoplasmic translation"/>
    <property type="evidence" value="ECO:0000266"/>
    <property type="project" value="PomBase"/>
</dbReference>
<dbReference type="GO" id="GO:0000028">
    <property type="term" value="P:ribosomal small subunit assembly"/>
    <property type="evidence" value="ECO:0000318"/>
    <property type="project" value="GO_Central"/>
</dbReference>
<dbReference type="GO" id="GO:0006412">
    <property type="term" value="P:translation"/>
    <property type="evidence" value="ECO:0000318"/>
    <property type="project" value="GO_Central"/>
</dbReference>
<dbReference type="CDD" id="cd14867">
    <property type="entry name" value="uS7_Eukaryote"/>
    <property type="match status" value="1"/>
</dbReference>
<dbReference type="FunFam" id="1.10.455.10:FF:000002">
    <property type="entry name" value="40S ribosomal protein S5"/>
    <property type="match status" value="1"/>
</dbReference>
<dbReference type="Gene3D" id="1.10.455.10">
    <property type="entry name" value="Ribosomal protein S7 domain"/>
    <property type="match status" value="1"/>
</dbReference>
<dbReference type="InterPro" id="IPR000235">
    <property type="entry name" value="Ribosomal_uS7"/>
</dbReference>
<dbReference type="InterPro" id="IPR020606">
    <property type="entry name" value="Ribosomal_uS7_CS"/>
</dbReference>
<dbReference type="InterPro" id="IPR023798">
    <property type="entry name" value="Ribosomal_uS7_dom"/>
</dbReference>
<dbReference type="InterPro" id="IPR036823">
    <property type="entry name" value="Ribosomal_uS7_dom_sf"/>
</dbReference>
<dbReference type="InterPro" id="IPR005716">
    <property type="entry name" value="Ribosomal_uS7_euk/arc"/>
</dbReference>
<dbReference type="NCBIfam" id="NF003106">
    <property type="entry name" value="PRK04027.1"/>
    <property type="match status" value="1"/>
</dbReference>
<dbReference type="NCBIfam" id="TIGR01028">
    <property type="entry name" value="uS7_euk_arch"/>
    <property type="match status" value="1"/>
</dbReference>
<dbReference type="PANTHER" id="PTHR11205">
    <property type="entry name" value="RIBOSOMAL PROTEIN S7"/>
    <property type="match status" value="1"/>
</dbReference>
<dbReference type="Pfam" id="PF00177">
    <property type="entry name" value="Ribosomal_S7"/>
    <property type="match status" value="1"/>
</dbReference>
<dbReference type="PIRSF" id="PIRSF002122">
    <property type="entry name" value="RPS7p_RPS7a_RPS5e_RPS7o"/>
    <property type="match status" value="1"/>
</dbReference>
<dbReference type="SUPFAM" id="SSF47973">
    <property type="entry name" value="Ribosomal protein S7"/>
    <property type="match status" value="1"/>
</dbReference>
<dbReference type="PROSITE" id="PS00052">
    <property type="entry name" value="RIBOSOMAL_S7"/>
    <property type="match status" value="1"/>
</dbReference>
<reference key="1">
    <citation type="journal article" date="2002" name="Nature">
        <title>The genome sequence of Schizosaccharomyces pombe.</title>
        <authorList>
            <person name="Wood V."/>
            <person name="Gwilliam R."/>
            <person name="Rajandream M.A."/>
            <person name="Lyne M.H."/>
            <person name="Lyne R."/>
            <person name="Stewart A."/>
            <person name="Sgouros J.G."/>
            <person name="Peat N."/>
            <person name="Hayles J."/>
            <person name="Baker S.G."/>
            <person name="Basham D."/>
            <person name="Bowman S."/>
            <person name="Brooks K."/>
            <person name="Brown D."/>
            <person name="Brown S."/>
            <person name="Chillingworth T."/>
            <person name="Churcher C.M."/>
            <person name="Collins M."/>
            <person name="Connor R."/>
            <person name="Cronin A."/>
            <person name="Davis P."/>
            <person name="Feltwell T."/>
            <person name="Fraser A."/>
            <person name="Gentles S."/>
            <person name="Goble A."/>
            <person name="Hamlin N."/>
            <person name="Harris D.E."/>
            <person name="Hidalgo J."/>
            <person name="Hodgson G."/>
            <person name="Holroyd S."/>
            <person name="Hornsby T."/>
            <person name="Howarth S."/>
            <person name="Huckle E.J."/>
            <person name="Hunt S."/>
            <person name="Jagels K."/>
            <person name="James K.D."/>
            <person name="Jones L."/>
            <person name="Jones M."/>
            <person name="Leather S."/>
            <person name="McDonald S."/>
            <person name="McLean J."/>
            <person name="Mooney P."/>
            <person name="Moule S."/>
            <person name="Mungall K.L."/>
            <person name="Murphy L.D."/>
            <person name="Niblett D."/>
            <person name="Odell C."/>
            <person name="Oliver K."/>
            <person name="O'Neil S."/>
            <person name="Pearson D."/>
            <person name="Quail M.A."/>
            <person name="Rabbinowitsch E."/>
            <person name="Rutherford K.M."/>
            <person name="Rutter S."/>
            <person name="Saunders D."/>
            <person name="Seeger K."/>
            <person name="Sharp S."/>
            <person name="Skelton J."/>
            <person name="Simmonds M.N."/>
            <person name="Squares R."/>
            <person name="Squares S."/>
            <person name="Stevens K."/>
            <person name="Taylor K."/>
            <person name="Taylor R.G."/>
            <person name="Tivey A."/>
            <person name="Walsh S.V."/>
            <person name="Warren T."/>
            <person name="Whitehead S."/>
            <person name="Woodward J.R."/>
            <person name="Volckaert G."/>
            <person name="Aert R."/>
            <person name="Robben J."/>
            <person name="Grymonprez B."/>
            <person name="Weltjens I."/>
            <person name="Vanstreels E."/>
            <person name="Rieger M."/>
            <person name="Schaefer M."/>
            <person name="Mueller-Auer S."/>
            <person name="Gabel C."/>
            <person name="Fuchs M."/>
            <person name="Duesterhoeft A."/>
            <person name="Fritzc C."/>
            <person name="Holzer E."/>
            <person name="Moestl D."/>
            <person name="Hilbert H."/>
            <person name="Borzym K."/>
            <person name="Langer I."/>
            <person name="Beck A."/>
            <person name="Lehrach H."/>
            <person name="Reinhardt R."/>
            <person name="Pohl T.M."/>
            <person name="Eger P."/>
            <person name="Zimmermann W."/>
            <person name="Wedler H."/>
            <person name="Wambutt R."/>
            <person name="Purnelle B."/>
            <person name="Goffeau A."/>
            <person name="Cadieu E."/>
            <person name="Dreano S."/>
            <person name="Gloux S."/>
            <person name="Lelaure V."/>
            <person name="Mottier S."/>
            <person name="Galibert F."/>
            <person name="Aves S.J."/>
            <person name="Xiang Z."/>
            <person name="Hunt C."/>
            <person name="Moore K."/>
            <person name="Hurst S.M."/>
            <person name="Lucas M."/>
            <person name="Rochet M."/>
            <person name="Gaillardin C."/>
            <person name="Tallada V.A."/>
            <person name="Garzon A."/>
            <person name="Thode G."/>
            <person name="Daga R.R."/>
            <person name="Cruzado L."/>
            <person name="Jimenez J."/>
            <person name="Sanchez M."/>
            <person name="del Rey F."/>
            <person name="Benito J."/>
            <person name="Dominguez A."/>
            <person name="Revuelta J.L."/>
            <person name="Moreno S."/>
            <person name="Armstrong J."/>
            <person name="Forsburg S.L."/>
            <person name="Cerutti L."/>
            <person name="Lowe T."/>
            <person name="McCombie W.R."/>
            <person name="Paulsen I."/>
            <person name="Potashkin J."/>
            <person name="Shpakovski G.V."/>
            <person name="Ussery D."/>
            <person name="Barrell B.G."/>
            <person name="Nurse P."/>
        </authorList>
    </citation>
    <scope>NUCLEOTIDE SEQUENCE [LARGE SCALE GENOMIC DNA]</scope>
    <source>
        <strain>972 / ATCC 24843</strain>
    </source>
</reference>
<reference key="2">
    <citation type="journal article" date="2006" name="Nat. Biotechnol.">
        <title>ORFeome cloning and global analysis of protein localization in the fission yeast Schizosaccharomyces pombe.</title>
        <authorList>
            <person name="Matsuyama A."/>
            <person name="Arai R."/>
            <person name="Yashiroda Y."/>
            <person name="Shirai A."/>
            <person name="Kamata A."/>
            <person name="Sekido S."/>
            <person name="Kobayashi Y."/>
            <person name="Hashimoto A."/>
            <person name="Hamamoto M."/>
            <person name="Hiraoka Y."/>
            <person name="Horinouchi S."/>
            <person name="Yoshida M."/>
        </authorList>
    </citation>
    <scope>SUBCELLULAR LOCATION [LARGE SCALE ANALYSIS]</scope>
</reference>
<evidence type="ECO:0000250" key="1">
    <source>
        <dbReference type="UniProtKB" id="P26783"/>
    </source>
</evidence>
<evidence type="ECO:0000269" key="2">
    <source>
    </source>
</evidence>
<evidence type="ECO:0000305" key="3"/>
<proteinExistence type="inferred from homology"/>
<keyword id="KW-0963">Cytoplasm</keyword>
<keyword id="KW-1185">Reference proteome</keyword>
<keyword id="KW-0687">Ribonucleoprotein</keyword>
<keyword id="KW-0689">Ribosomal protein</keyword>
<protein>
    <recommendedName>
        <fullName evidence="3">Small ribosomal subunit protein uS7B</fullName>
    </recommendedName>
    <alternativeName>
        <fullName>40S ribosomal protein S5-B</fullName>
    </alternativeName>
</protein>
<feature type="chain" id="PRO_0000124539" description="Small ribosomal subunit protein uS7B">
    <location>
        <begin position="1"/>
        <end position="203"/>
    </location>
</feature>
<gene>
    <name type="primary">rps502</name>
    <name type="synonym">rps5-2</name>
    <name type="synonym">rps5b</name>
    <name type="ORF">SPAC328.10c</name>
</gene>